<gene>
    <name evidence="1" type="primary">L4</name>
</gene>
<feature type="chain" id="PRO_0000421131" description="Pre-hexon-linking protein VIII" evidence="1">
    <location>
        <begin position="1"/>
        <end position="227"/>
    </location>
</feature>
<feature type="peptide" id="PRO_0000036495" description="Hexon-linking protein-N" evidence="1">
    <location>
        <begin position="1"/>
        <end position="111"/>
    </location>
</feature>
<feature type="propeptide" id="PRO_0000421132" evidence="1">
    <location>
        <begin position="112"/>
        <end position="157"/>
    </location>
</feature>
<feature type="peptide" id="PRO_0000036496" description="Hexon-linking protein-C" evidence="1">
    <location>
        <begin position="158"/>
        <end position="227"/>
    </location>
</feature>
<feature type="site" description="Cleavage; by viral protease" evidence="1">
    <location>
        <begin position="111"/>
        <end position="112"/>
    </location>
</feature>
<feature type="site" description="Cleavage; by viral protease" evidence="1">
    <location>
        <begin position="157"/>
        <end position="158"/>
    </location>
</feature>
<feature type="modified residue" description="Phosphothreonine; by host" evidence="1">
    <location>
        <position position="64"/>
    </location>
</feature>
<feature type="modified residue" description="Phosphoserine; by host" evidence="1">
    <location>
        <position position="118"/>
    </location>
</feature>
<feature type="modified residue" description="Phosphoserine; by host" evidence="1">
    <location>
        <position position="174"/>
    </location>
</feature>
<feature type="sequence conflict" description="In Ref. 2; no nucleotide entry." evidence="5" ref="2">
    <original>P</original>
    <variation>S</variation>
    <location>
        <position position="160"/>
    </location>
</feature>
<feature type="helix" evidence="6">
    <location>
        <begin position="40"/>
        <end position="43"/>
    </location>
</feature>
<feature type="helix" evidence="6">
    <location>
        <begin position="45"/>
        <end position="47"/>
    </location>
</feature>
<feature type="helix" evidence="6">
    <location>
        <begin position="51"/>
        <end position="57"/>
    </location>
</feature>
<feature type="strand" evidence="6">
    <location>
        <begin position="58"/>
        <end position="61"/>
    </location>
</feature>
<feature type="strand" evidence="6">
    <location>
        <begin position="67"/>
        <end position="70"/>
    </location>
</feature>
<comment type="function">
    <molecule>Hexon-linking protein-N</molecule>
    <text evidence="1 4">Structural component of the virion that acts as a cement protein on the capsid interior and which glue the peripentonal hexons and group-of-nine hexons together.</text>
</comment>
<comment type="function">
    <molecule>Hexon-linking protein-C</molecule>
    <text evidence="1 4">Structural component of the virion that acts as a cement protein on the capsid interior and which glue the peripentonal hexons and group-of-nine hexons together.</text>
</comment>
<comment type="subunit">
    <text evidence="1 3 4">Interacts with the peripentonal hexons as well as the hexons in the facets (PubMed:20798312, PubMed:25071205). Part of a complex composed of the core-capsid bridging protein, the endosome lysis protein VI and the hexon-linking protein VIII; these interactions bridge the virus core to the capsid (PubMed:25071205).</text>
</comment>
<comment type="subcellular location">
    <molecule>Hexon-linking protein-C</molecule>
    <subcellularLocation>
        <location evidence="1 4">Virion</location>
    </subcellularLocation>
    <text evidence="1 4">Located on the inner side of the capsid shell. Present in 120 copies per virion.</text>
</comment>
<comment type="subcellular location">
    <molecule>Pre-hexon-linking protein VIII</molecule>
    <subcellularLocation>
        <location evidence="1 5">Host nucleus</location>
    </subcellularLocation>
</comment>
<comment type="subcellular location">
    <molecule>Hexon-linking protein-N</molecule>
    <subcellularLocation>
        <location evidence="1 4">Virion</location>
    </subcellularLocation>
    <text evidence="1 4">Located on the inner side of the capsid shell. Present in 120 copies per virion.</text>
</comment>
<comment type="induction">
    <text evidence="1">Expressed in the late phase of the viral replicative cycle.</text>
</comment>
<comment type="PTM">
    <text evidence="1 2 3 4">Cleaved by the viral protease during virion maturation. May cause the middle segment to be shed from the capsid.</text>
</comment>
<comment type="miscellaneous">
    <text evidence="1">All late proteins expressed from the major late promoter are produced by alternative splicing and alternative polyadenylation of the same gene giving rise to non-overlapping ORFs. A leader sequence is present in the N-terminus of all these mRNAs and is recognized by the viral shutoff protein to provide expression although conventional translation via ribosome scanning from the cap has been shut off in the host cell.</text>
</comment>
<comment type="similarity">
    <text evidence="1 5">Belongs to the adenoviridae hexon-linking protein family.</text>
</comment>
<comment type="caution">
    <text evidence="5">An interaction between hexon-linking protein IIIa and hexon-linking protein VIII as been described in PubMed:20798312. However, the subcellular location of hexon-linking protein IIIa was incorrectly assigned to the capsid interior.</text>
</comment>
<organism>
    <name type="scientific">Human adenovirus C serotype 5</name>
    <name type="common">HAdV-5</name>
    <name type="synonym">Human adenovirus 5</name>
    <dbReference type="NCBI Taxonomy" id="28285"/>
    <lineage>
        <taxon>Viruses</taxon>
        <taxon>Varidnaviria</taxon>
        <taxon>Bamfordvirae</taxon>
        <taxon>Preplasmiviricota</taxon>
        <taxon>Tectiliviricetes</taxon>
        <taxon>Rowavirales</taxon>
        <taxon>Adenoviridae</taxon>
        <taxon>Mastadenovirus</taxon>
        <taxon>Human mastadenovirus C</taxon>
    </lineage>
</organism>
<name>CAP8_ADE05</name>
<evidence type="ECO:0000255" key="1">
    <source>
        <dbReference type="HAMAP-Rule" id="MF_04049"/>
    </source>
</evidence>
<evidence type="ECO:0000269" key="2">
    <source>
    </source>
</evidence>
<evidence type="ECO:0000269" key="3">
    <source>
    </source>
</evidence>
<evidence type="ECO:0000269" key="4">
    <source>
    </source>
</evidence>
<evidence type="ECO:0000305" key="5"/>
<evidence type="ECO:0007829" key="6">
    <source>
        <dbReference type="PDB" id="6CGV"/>
    </source>
</evidence>
<organismHost>
    <name type="scientific">Homo sapiens</name>
    <name type="common">Human</name>
    <dbReference type="NCBI Taxonomy" id="9606"/>
</organismHost>
<dbReference type="EMBL" id="M73260">
    <property type="protein sequence ID" value="AAA96413.1"/>
    <property type="molecule type" value="Genomic_DNA"/>
</dbReference>
<dbReference type="PIR" id="E39449">
    <property type="entry name" value="SXAD85"/>
</dbReference>
<dbReference type="RefSeq" id="AP_000217.1">
    <property type="nucleotide sequence ID" value="AC_000008.1"/>
</dbReference>
<dbReference type="PDB" id="6B1T">
    <property type="method" value="EM"/>
    <property type="resolution" value="3.20 A"/>
    <property type="chains" value="O/P=1-227"/>
</dbReference>
<dbReference type="PDB" id="6CGV">
    <property type="method" value="X-ray"/>
    <property type="resolution" value="3.80 A"/>
    <property type="chains" value="U/V=1-227"/>
</dbReference>
<dbReference type="PDB" id="7S78">
    <property type="method" value="EM"/>
    <property type="resolution" value="3.72 A"/>
    <property type="chains" value="U/V=1-227"/>
</dbReference>
<dbReference type="PDBsum" id="6B1T"/>
<dbReference type="PDBsum" id="6CGV"/>
<dbReference type="PDBsum" id="7S78"/>
<dbReference type="EMDB" id="EMD-24881"/>
<dbReference type="EMDB" id="EMD-7034"/>
<dbReference type="SMR" id="P24936"/>
<dbReference type="IntAct" id="P24936">
    <property type="interactions" value="1"/>
</dbReference>
<dbReference type="Proteomes" id="UP000004992">
    <property type="component" value="Genome"/>
</dbReference>
<dbReference type="GO" id="GO:0042025">
    <property type="term" value="C:host cell nucleus"/>
    <property type="evidence" value="ECO:0007669"/>
    <property type="project" value="UniProtKB-SubCell"/>
</dbReference>
<dbReference type="GO" id="GO:0019028">
    <property type="term" value="C:viral capsid"/>
    <property type="evidence" value="ECO:0007669"/>
    <property type="project" value="UniProtKB-UniRule"/>
</dbReference>
<dbReference type="GO" id="GO:0031423">
    <property type="term" value="F:hexon binding"/>
    <property type="evidence" value="ECO:0007669"/>
    <property type="project" value="InterPro"/>
</dbReference>
<dbReference type="Gene3D" id="6.10.250.1460">
    <property type="match status" value="1"/>
</dbReference>
<dbReference type="HAMAP" id="MF_04049">
    <property type="entry name" value="ADV_CAP8"/>
    <property type="match status" value="1"/>
</dbReference>
<dbReference type="InterPro" id="IPR000646">
    <property type="entry name" value="Adeno_PVIII"/>
</dbReference>
<dbReference type="Pfam" id="PF01310">
    <property type="entry name" value="Adeno_PVIII"/>
    <property type="match status" value="1"/>
</dbReference>
<accession>P24936</accession>
<protein>
    <recommendedName>
        <fullName evidence="1">Pre-hexon-linking protein VIII</fullName>
    </recommendedName>
    <alternativeName>
        <fullName evidence="1">Pre-protein VIII</fullName>
        <shortName evidence="1">pVIII</shortName>
    </alternativeName>
    <component>
        <recommendedName>
            <fullName evidence="1">Hexon-linking protein-N</fullName>
        </recommendedName>
        <alternativeName>
            <fullName evidence="1">12.1 kDa protein VIII</fullName>
        </alternativeName>
        <alternativeName>
            <fullName evidence="1">Protein VIII-N</fullName>
        </alternativeName>
    </component>
    <component>
        <recommendedName>
            <fullName evidence="1">Hexon-linking protein-C</fullName>
        </recommendedName>
        <alternativeName>
            <fullName evidence="1">7.6 kDa protein VIII</fullName>
        </alternativeName>
        <alternativeName>
            <fullName evidence="1">Protein VIII-C</fullName>
        </alternativeName>
    </component>
</protein>
<proteinExistence type="evidence at protein level"/>
<sequence length="227" mass="24687">MSKEIPTPYMWSYQPQMGLAAGAAQDYSTRINYMSAGPHMISRVNGIRAHRNRILLEQAAITTTPRNNLNPRSWPAALVYQESPAPTTVVLPRDAQAEVQMTNSGAQLAGGFRHRVRSPGQGITHLTIRGRGIQLNDESVSSSLGLRPDGTFQIGGAGRPSFTPRQAILTLQTSSSEPRSGGIGTLQFIEEFVPSVYFNPFSGPPGHYPDQFIPNFDAVKDSADGYD</sequence>
<reference key="1">
    <citation type="journal article" date="1992" name="Virology">
        <title>The sequence of the genome of adenovirus type 5 and its comparison with the genome of adenovirus type 2.</title>
        <authorList>
            <person name="Chroboczek J."/>
            <person name="Bieber F."/>
            <person name="Jacrot B."/>
        </authorList>
    </citation>
    <scope>NUCLEOTIDE SEQUENCE [GENOMIC DNA]</scope>
</reference>
<reference key="2">
    <citation type="journal article" date="2012" name="Nat. Methods">
        <title>De novo derivation of proteomes from transcriptomes for transcript and protein identification.</title>
        <authorList>
            <person name="Evans V.C."/>
            <person name="Barker G."/>
            <person name="Heesom K.J."/>
            <person name="Fan J."/>
            <person name="Bessant C."/>
            <person name="Matthews D.A."/>
        </authorList>
    </citation>
    <scope>NUCLEOTIDE SEQUENCE [MRNA]</scope>
</reference>
<reference key="3">
    <citation type="journal article" date="2012" name="Viruses">
        <title>Latest insights on adenovirus structure and assembly.</title>
        <authorList>
            <person name="San Martin C."/>
        </authorList>
    </citation>
    <scope>REVIEW</scope>
</reference>
<reference key="4">
    <citation type="journal article" date="2006" name="J. Virol.">
        <title>Visualization of alpha-helices in a 6-angstrom resolution cryoelectron microscopy structure of adenovirus allows refinement of capsid protein assignments.</title>
        <authorList>
            <person name="Saban S.D."/>
            <person name="Silvestry M."/>
            <person name="Nemerow G.R."/>
            <person name="Stewart P.L."/>
        </authorList>
    </citation>
    <scope>STRUCTURE BY ELECTRON MICROSCOPY (6.0 ANGSTROMS) OF THE VIRAL PARTICLE</scope>
    <scope>PROTEOLYTIC CLEAVAGE BY VIRAL PROTEASE</scope>
</reference>
<reference key="5">
    <citation type="journal article" date="2010" name="Science">
        <title>Atomic structure of human adenovirus by cryo-EM reveals interactions among protein networks.</title>
        <authorList>
            <person name="Liu H."/>
            <person name="Jin L."/>
            <person name="Koh S.B."/>
            <person name="Atanasov I."/>
            <person name="Schein S."/>
            <person name="Wu L."/>
            <person name="Zhou Z.H."/>
        </authorList>
    </citation>
    <scope>STRUCTURE BY ELECTRON MICROSCOPY (3.6 ANGSTROMS) OF THE VIRAL PARTICLE</scope>
    <scope>PROTEOLYTIC CLEAVAGE BY VIRAL PROTEASE</scope>
    <scope>INTERACTION WITH THE HEXON PROTEIN</scope>
</reference>
<reference key="6">
    <citation type="journal article" date="2010" name="Science">
        <title>Crystal structure of human adenovirus at 3.5 A resolution.</title>
        <authorList>
            <person name="Reddy V.S."/>
            <person name="Natchiar S.K."/>
            <person name="Stewart P.L."/>
            <person name="Nemerow G.R."/>
        </authorList>
    </citation>
    <scope>X-RAY CRYSTALLOGRAPHY (3.5 ANGSTROMS)</scope>
</reference>
<reference key="7">
    <citation type="journal article" date="2014" name="Proc. Natl. Acad. Sci. U.S.A.">
        <title>Structures and organization of adenovirus cement proteins provide insights into the role of capsid maturation in virus entry and infection.</title>
        <authorList>
            <person name="Reddy V.S."/>
            <person name="Nemerow G.R."/>
        </authorList>
    </citation>
    <scope>X-RAY CRYSTALLOGRAPHY (3.80 ANGSTROMS)</scope>
    <scope>IDENTIFICATION IN A COMPLEX WITH ENDOSOME LYSIS PROTEIN VI AND HEXON-LINKING PROTEIN VIII</scope>
    <scope>INTERACTION WITH THE HEXON PROTEIN</scope>
    <scope>PROTEOLYTIC CLEAVAGE BY VIRAL PROTEASE</scope>
    <scope>SUBCELLULAR LOCATION</scope>
</reference>
<keyword id="KW-0002">3D-structure</keyword>
<keyword id="KW-0167">Capsid protein</keyword>
<keyword id="KW-1048">Host nucleus</keyword>
<keyword id="KW-0426">Late protein</keyword>
<keyword id="KW-0597">Phosphoprotein</keyword>
<keyword id="KW-1185">Reference proteome</keyword>
<keyword id="KW-0946">Virion</keyword>